<gene>
    <name evidence="1" type="primary">bioD</name>
    <name type="ordered locus">Mflv_3627</name>
</gene>
<name>BIOD_MYCGI</name>
<comment type="function">
    <text evidence="1">Catalyzes a mechanistically unusual reaction, the ATP-dependent insertion of CO2 between the N7 and N8 nitrogen atoms of 7,8-diaminopelargonic acid (DAPA, also called 7,8-diammoniononanoate) to form a ureido ring.</text>
</comment>
<comment type="catalytic activity">
    <reaction evidence="1">
        <text>(7R,8S)-7,8-diammoniononanoate + CO2 + ATP = (4R,5S)-dethiobiotin + ADP + phosphate + 3 H(+)</text>
        <dbReference type="Rhea" id="RHEA:15805"/>
        <dbReference type="ChEBI" id="CHEBI:15378"/>
        <dbReference type="ChEBI" id="CHEBI:16526"/>
        <dbReference type="ChEBI" id="CHEBI:30616"/>
        <dbReference type="ChEBI" id="CHEBI:43474"/>
        <dbReference type="ChEBI" id="CHEBI:149469"/>
        <dbReference type="ChEBI" id="CHEBI:149473"/>
        <dbReference type="ChEBI" id="CHEBI:456216"/>
        <dbReference type="EC" id="6.3.3.3"/>
    </reaction>
</comment>
<comment type="cofactor">
    <cofactor evidence="1">
        <name>Mg(2+)</name>
        <dbReference type="ChEBI" id="CHEBI:18420"/>
    </cofactor>
</comment>
<comment type="pathway">
    <text evidence="1">Cofactor biosynthesis; biotin biosynthesis; biotin from 7,8-diaminononanoate: step 1/2.</text>
</comment>
<comment type="subunit">
    <text evidence="1">Homodimer.</text>
</comment>
<comment type="subcellular location">
    <subcellularLocation>
        <location evidence="1">Cytoplasm</location>
    </subcellularLocation>
</comment>
<comment type="similarity">
    <text evidence="1">Belongs to the dethiobiotin synthetase family.</text>
</comment>
<evidence type="ECO:0000255" key="1">
    <source>
        <dbReference type="HAMAP-Rule" id="MF_00336"/>
    </source>
</evidence>
<proteinExistence type="inferred from homology"/>
<dbReference type="EC" id="6.3.3.3" evidence="1"/>
<dbReference type="EMBL" id="CP000656">
    <property type="protein sequence ID" value="ABP46101.1"/>
    <property type="molecule type" value="Genomic_DNA"/>
</dbReference>
<dbReference type="SMR" id="A4T9L2"/>
<dbReference type="STRING" id="350054.Mflv_3627"/>
<dbReference type="KEGG" id="mgi:Mflv_3627"/>
<dbReference type="eggNOG" id="COG0132">
    <property type="taxonomic scope" value="Bacteria"/>
</dbReference>
<dbReference type="HOGENOM" id="CLU_072551_1_0_11"/>
<dbReference type="OrthoDB" id="9802610at2"/>
<dbReference type="UniPathway" id="UPA00078">
    <property type="reaction ID" value="UER00161"/>
</dbReference>
<dbReference type="GO" id="GO:0005829">
    <property type="term" value="C:cytosol"/>
    <property type="evidence" value="ECO:0007669"/>
    <property type="project" value="TreeGrafter"/>
</dbReference>
<dbReference type="GO" id="GO:0005524">
    <property type="term" value="F:ATP binding"/>
    <property type="evidence" value="ECO:0007669"/>
    <property type="project" value="UniProtKB-UniRule"/>
</dbReference>
<dbReference type="GO" id="GO:0004141">
    <property type="term" value="F:dethiobiotin synthase activity"/>
    <property type="evidence" value="ECO:0007669"/>
    <property type="project" value="UniProtKB-UniRule"/>
</dbReference>
<dbReference type="GO" id="GO:0000287">
    <property type="term" value="F:magnesium ion binding"/>
    <property type="evidence" value="ECO:0007669"/>
    <property type="project" value="UniProtKB-UniRule"/>
</dbReference>
<dbReference type="GO" id="GO:0009102">
    <property type="term" value="P:biotin biosynthetic process"/>
    <property type="evidence" value="ECO:0007669"/>
    <property type="project" value="UniProtKB-UniRule"/>
</dbReference>
<dbReference type="CDD" id="cd03109">
    <property type="entry name" value="DTBS"/>
    <property type="match status" value="1"/>
</dbReference>
<dbReference type="Gene3D" id="3.40.50.300">
    <property type="entry name" value="P-loop containing nucleotide triphosphate hydrolases"/>
    <property type="match status" value="1"/>
</dbReference>
<dbReference type="HAMAP" id="MF_00336">
    <property type="entry name" value="BioD"/>
    <property type="match status" value="1"/>
</dbReference>
<dbReference type="InterPro" id="IPR004472">
    <property type="entry name" value="DTB_synth_BioD"/>
</dbReference>
<dbReference type="InterPro" id="IPR027417">
    <property type="entry name" value="P-loop_NTPase"/>
</dbReference>
<dbReference type="NCBIfam" id="TIGR00347">
    <property type="entry name" value="bioD"/>
    <property type="match status" value="1"/>
</dbReference>
<dbReference type="PANTHER" id="PTHR43210">
    <property type="entry name" value="DETHIOBIOTIN SYNTHETASE"/>
    <property type="match status" value="1"/>
</dbReference>
<dbReference type="PANTHER" id="PTHR43210:SF5">
    <property type="entry name" value="DETHIOBIOTIN SYNTHETASE"/>
    <property type="match status" value="1"/>
</dbReference>
<dbReference type="Pfam" id="PF13500">
    <property type="entry name" value="AAA_26"/>
    <property type="match status" value="1"/>
</dbReference>
<dbReference type="PIRSF" id="PIRSF006755">
    <property type="entry name" value="DTB_synth"/>
    <property type="match status" value="1"/>
</dbReference>
<dbReference type="SUPFAM" id="SSF52540">
    <property type="entry name" value="P-loop containing nucleoside triphosphate hydrolases"/>
    <property type="match status" value="1"/>
</dbReference>
<accession>A4T9L2</accession>
<protein>
    <recommendedName>
        <fullName evidence="1">ATP-dependent dethiobiotin synthetase BioD</fullName>
        <ecNumber evidence="1">6.3.3.3</ecNumber>
    </recommendedName>
    <alternativeName>
        <fullName evidence="1">DTB synthetase</fullName>
        <shortName evidence="1">DTBS</shortName>
    </alternativeName>
    <alternativeName>
        <fullName evidence="1">Dethiobiotin synthase</fullName>
    </alternativeName>
</protein>
<keyword id="KW-0067">ATP-binding</keyword>
<keyword id="KW-0093">Biotin biosynthesis</keyword>
<keyword id="KW-0963">Cytoplasm</keyword>
<keyword id="KW-0436">Ligase</keyword>
<keyword id="KW-0460">Magnesium</keyword>
<keyword id="KW-0479">Metal-binding</keyword>
<keyword id="KW-0547">Nucleotide-binding</keyword>
<reference key="1">
    <citation type="submission" date="2007-04" db="EMBL/GenBank/DDBJ databases">
        <title>Complete sequence of chromosome of Mycobacterium gilvum PYR-GCK.</title>
        <authorList>
            <consortium name="US DOE Joint Genome Institute"/>
            <person name="Copeland A."/>
            <person name="Lucas S."/>
            <person name="Lapidus A."/>
            <person name="Barry K."/>
            <person name="Detter J.C."/>
            <person name="Glavina del Rio T."/>
            <person name="Hammon N."/>
            <person name="Israni S."/>
            <person name="Dalin E."/>
            <person name="Tice H."/>
            <person name="Pitluck S."/>
            <person name="Chain P."/>
            <person name="Malfatti S."/>
            <person name="Shin M."/>
            <person name="Vergez L."/>
            <person name="Schmutz J."/>
            <person name="Larimer F."/>
            <person name="Land M."/>
            <person name="Hauser L."/>
            <person name="Kyrpides N."/>
            <person name="Mikhailova N."/>
            <person name="Miller C."/>
            <person name="Richardson P."/>
        </authorList>
    </citation>
    <scope>NUCLEOTIDE SEQUENCE [LARGE SCALE GENOMIC DNA]</scope>
    <source>
        <strain>PYR-GCK</strain>
    </source>
</reference>
<sequence length="226" mass="23051">MSILVVTGTGTGIGKTVVTAALACHARLAGLDVAVCKPIQTGTRDGDDDLAVVARLAGVEDLHSLAKFPEPLAPLAAAHRAGADLPSRAALDDLIAAVDRPGRLTLVEGAGGLLVEIGRGGVTLRDLAEDLRAPVLTVVAPGLGTLNHTVLTLEALAHRDVRSEGLVIGSWPAQPGVAEIDNRDALARLGPVRAALPAGAGTLSGTDFERLSVQAFDEAWVRGLVG</sequence>
<organism>
    <name type="scientific">Mycolicibacterium gilvum (strain PYR-GCK)</name>
    <name type="common">Mycobacterium gilvum (strain PYR-GCK)</name>
    <dbReference type="NCBI Taxonomy" id="350054"/>
    <lineage>
        <taxon>Bacteria</taxon>
        <taxon>Bacillati</taxon>
        <taxon>Actinomycetota</taxon>
        <taxon>Actinomycetes</taxon>
        <taxon>Mycobacteriales</taxon>
        <taxon>Mycobacteriaceae</taxon>
        <taxon>Mycolicibacterium</taxon>
    </lineage>
</organism>
<feature type="chain" id="PRO_1000079276" description="ATP-dependent dethiobiotin synthetase BioD">
    <location>
        <begin position="1"/>
        <end position="226"/>
    </location>
</feature>
<feature type="active site" evidence="1">
    <location>
        <position position="37"/>
    </location>
</feature>
<feature type="binding site" evidence="1">
    <location>
        <begin position="12"/>
        <end position="17"/>
    </location>
    <ligand>
        <name>ATP</name>
        <dbReference type="ChEBI" id="CHEBI:30616"/>
    </ligand>
</feature>
<feature type="binding site" evidence="1">
    <location>
        <position position="16"/>
    </location>
    <ligand>
        <name>Mg(2+)</name>
        <dbReference type="ChEBI" id="CHEBI:18420"/>
    </ligand>
</feature>
<feature type="binding site" evidence="1">
    <location>
        <position position="41"/>
    </location>
    <ligand>
        <name>substrate</name>
    </ligand>
</feature>
<feature type="binding site" evidence="1">
    <location>
        <position position="49"/>
    </location>
    <ligand>
        <name>ATP</name>
        <dbReference type="ChEBI" id="CHEBI:30616"/>
    </ligand>
</feature>
<feature type="binding site" evidence="1">
    <location>
        <position position="49"/>
    </location>
    <ligand>
        <name>Mg(2+)</name>
        <dbReference type="ChEBI" id="CHEBI:18420"/>
    </ligand>
</feature>
<feature type="binding site" evidence="1">
    <location>
        <begin position="108"/>
        <end position="111"/>
    </location>
    <ligand>
        <name>ATP</name>
        <dbReference type="ChEBI" id="CHEBI:30616"/>
    </ligand>
</feature>
<feature type="binding site" evidence="1">
    <location>
        <position position="108"/>
    </location>
    <ligand>
        <name>Mg(2+)</name>
        <dbReference type="ChEBI" id="CHEBI:18420"/>
    </ligand>
</feature>
<feature type="binding site" evidence="1">
    <location>
        <begin position="169"/>
        <end position="170"/>
    </location>
    <ligand>
        <name>ATP</name>
        <dbReference type="ChEBI" id="CHEBI:30616"/>
    </ligand>
</feature>
<feature type="binding site" evidence="1">
    <location>
        <begin position="197"/>
        <end position="199"/>
    </location>
    <ligand>
        <name>ATP</name>
        <dbReference type="ChEBI" id="CHEBI:30616"/>
    </ligand>
</feature>